<keyword id="KW-0217">Developmental protein</keyword>
<keyword id="KW-0238">DNA-binding</keyword>
<keyword id="KW-0371">Homeobox</keyword>
<keyword id="KW-0539">Nucleus</keyword>
<keyword id="KW-1185">Reference proteome</keyword>
<keyword id="KW-0804">Transcription</keyword>
<keyword id="KW-0805">Transcription regulation</keyword>
<comment type="function">
    <text>Sequence-specific transcription factor which is part of a developmental regulatory system that provides cells with specific positional identities on the anterior-posterior axis.</text>
</comment>
<comment type="subcellular location">
    <subcellularLocation>
        <location>Nucleus</location>
    </subcellularLocation>
</comment>
<comment type="developmental stage">
    <text>Expressed early in development.</text>
</comment>
<comment type="similarity">
    <text evidence="3">Belongs to the Antp homeobox family. Deformed subfamily.</text>
</comment>
<reference key="1">
    <citation type="journal article" date="1986" name="EMBO J.">
        <title>Embryonic expression and nuclear localization of Xenopus homeobox (Xhox) gene products.</title>
        <authorList>
            <person name="Harvey R.P."/>
            <person name="Tabin C.J."/>
            <person name="Melton D.A."/>
        </authorList>
    </citation>
    <scope>NUCLEOTIDE SEQUENCE [GENOMIC DNA]</scope>
</reference>
<reference key="2">
    <citation type="submission" date="2005-10" db="EMBL/GenBank/DDBJ databases">
        <authorList>
            <consortium name="NIH - Xenopus Gene Collection (XGC) project"/>
        </authorList>
    </citation>
    <scope>NUCLEOTIDE SEQUENCE [LARGE SCALE MRNA]</scope>
    <source>
        <tissue>Embryo</tissue>
    </source>
</reference>
<proteinExistence type="evidence at transcript level"/>
<organism>
    <name type="scientific">Xenopus laevis</name>
    <name type="common">African clawed frog</name>
    <dbReference type="NCBI Taxonomy" id="8355"/>
    <lineage>
        <taxon>Eukaryota</taxon>
        <taxon>Metazoa</taxon>
        <taxon>Chordata</taxon>
        <taxon>Craniata</taxon>
        <taxon>Vertebrata</taxon>
        <taxon>Euteleostomi</taxon>
        <taxon>Amphibia</taxon>
        <taxon>Batrachia</taxon>
        <taxon>Anura</taxon>
        <taxon>Pipoidea</taxon>
        <taxon>Pipidae</taxon>
        <taxon>Xenopodinae</taxon>
        <taxon>Xenopus</taxon>
        <taxon>Xenopus</taxon>
    </lineage>
</organism>
<name>HXB4_XENLA</name>
<protein>
    <recommendedName>
        <fullName>Homeobox protein Hox-B4</fullName>
    </recommendedName>
    <alternativeName>
        <fullName>Xhox-1A</fullName>
    </alternativeName>
</protein>
<accession>P09070</accession>
<accession>Q3KQ14</accession>
<dbReference type="EMBL" id="M26884">
    <property type="protein sequence ID" value="AAA49756.1"/>
    <property type="molecule type" value="Genomic_DNA"/>
</dbReference>
<dbReference type="EMBL" id="BC106429">
    <property type="protein sequence ID" value="AAI06430.1"/>
    <property type="molecule type" value="mRNA"/>
</dbReference>
<dbReference type="PIR" id="A25108">
    <property type="entry name" value="A25108"/>
</dbReference>
<dbReference type="RefSeq" id="NP_001089733.1">
    <property type="nucleotide sequence ID" value="NM_001096264.1"/>
</dbReference>
<dbReference type="SMR" id="P09070"/>
<dbReference type="DNASU" id="734796"/>
<dbReference type="GeneID" id="734796"/>
<dbReference type="KEGG" id="xla:734796"/>
<dbReference type="AGR" id="Xenbase:XB-GENE-6078784"/>
<dbReference type="CTD" id="734796"/>
<dbReference type="Xenbase" id="XB-GENE-6078784">
    <property type="gene designation" value="hoxb4.S"/>
</dbReference>
<dbReference type="OMA" id="CHMDSNF"/>
<dbReference type="OrthoDB" id="6159439at2759"/>
<dbReference type="Proteomes" id="UP000186698">
    <property type="component" value="Chromosome 9_10S"/>
</dbReference>
<dbReference type="Bgee" id="734796">
    <property type="expression patterns" value="Expressed in neurula embryo and 10 other cell types or tissues"/>
</dbReference>
<dbReference type="GO" id="GO:0005654">
    <property type="term" value="C:nucleoplasm"/>
    <property type="evidence" value="ECO:0000318"/>
    <property type="project" value="GO_Central"/>
</dbReference>
<dbReference type="GO" id="GO:0000981">
    <property type="term" value="F:DNA-binding transcription factor activity, RNA polymerase II-specific"/>
    <property type="evidence" value="ECO:0000318"/>
    <property type="project" value="GO_Central"/>
</dbReference>
<dbReference type="GO" id="GO:0000978">
    <property type="term" value="F:RNA polymerase II cis-regulatory region sequence-specific DNA binding"/>
    <property type="evidence" value="ECO:0000318"/>
    <property type="project" value="GO_Central"/>
</dbReference>
<dbReference type="GO" id="GO:0009952">
    <property type="term" value="P:anterior/posterior pattern specification"/>
    <property type="evidence" value="ECO:0000318"/>
    <property type="project" value="GO_Central"/>
</dbReference>
<dbReference type="GO" id="GO:0048704">
    <property type="term" value="P:embryonic skeletal system morphogenesis"/>
    <property type="evidence" value="ECO:0000318"/>
    <property type="project" value="GO_Central"/>
</dbReference>
<dbReference type="GO" id="GO:0045944">
    <property type="term" value="P:positive regulation of transcription by RNA polymerase II"/>
    <property type="evidence" value="ECO:0000318"/>
    <property type="project" value="GO_Central"/>
</dbReference>
<dbReference type="CDD" id="cd00086">
    <property type="entry name" value="homeodomain"/>
    <property type="match status" value="1"/>
</dbReference>
<dbReference type="FunFam" id="1.10.10.60:FF:000609">
    <property type="entry name" value="Homeobox B4"/>
    <property type="match status" value="1"/>
</dbReference>
<dbReference type="Gene3D" id="1.10.10.60">
    <property type="entry name" value="Homeodomain-like"/>
    <property type="match status" value="1"/>
</dbReference>
<dbReference type="InterPro" id="IPR050609">
    <property type="entry name" value="Antp_homeobox_Deformed_sf"/>
</dbReference>
<dbReference type="InterPro" id="IPR001356">
    <property type="entry name" value="HD"/>
</dbReference>
<dbReference type="InterPro" id="IPR020479">
    <property type="entry name" value="HD_metazoa"/>
</dbReference>
<dbReference type="InterPro" id="IPR017995">
    <property type="entry name" value="Homeobox_antennapedia"/>
</dbReference>
<dbReference type="InterPro" id="IPR001827">
    <property type="entry name" value="Homeobox_Antennapedia_CS"/>
</dbReference>
<dbReference type="InterPro" id="IPR017970">
    <property type="entry name" value="Homeobox_CS"/>
</dbReference>
<dbReference type="InterPro" id="IPR009057">
    <property type="entry name" value="Homeodomain-like_sf"/>
</dbReference>
<dbReference type="PANTHER" id="PTHR45771:SF3">
    <property type="entry name" value="HOMEOBOX PROTEIN HOX-B4"/>
    <property type="match status" value="1"/>
</dbReference>
<dbReference type="PANTHER" id="PTHR45771">
    <property type="entry name" value="HOMEOTIC PROTEIN DEFORMED"/>
    <property type="match status" value="1"/>
</dbReference>
<dbReference type="Pfam" id="PF00046">
    <property type="entry name" value="Homeodomain"/>
    <property type="match status" value="1"/>
</dbReference>
<dbReference type="PRINTS" id="PR00025">
    <property type="entry name" value="ANTENNAPEDIA"/>
</dbReference>
<dbReference type="PRINTS" id="PR00024">
    <property type="entry name" value="HOMEOBOX"/>
</dbReference>
<dbReference type="SMART" id="SM00389">
    <property type="entry name" value="HOX"/>
    <property type="match status" value="1"/>
</dbReference>
<dbReference type="SUPFAM" id="SSF46689">
    <property type="entry name" value="Homeodomain-like"/>
    <property type="match status" value="1"/>
</dbReference>
<dbReference type="PROSITE" id="PS00032">
    <property type="entry name" value="ANTENNAPEDIA"/>
    <property type="match status" value="1"/>
</dbReference>
<dbReference type="PROSITE" id="PS00027">
    <property type="entry name" value="HOMEOBOX_1"/>
    <property type="match status" value="1"/>
</dbReference>
<dbReference type="PROSITE" id="PS50071">
    <property type="entry name" value="HOMEOBOX_2"/>
    <property type="match status" value="1"/>
</dbReference>
<sequence length="232" mass="26468">MRMSSFLISSNYVDPKFPPCEEYSHSDYSPGYYGSQKRESSFQHGAPYPRSVSSNSSSSASYSSCQGSVRQSARLPHSSGLVPGEKAHLEPHMPTSSPPSCSLKSSEHKHPDSPEQDPVVYPWMKKAHISKATSTYSDGEAKRSRTAYTRQQVLELEKEFHYNRYLTRRRRVEIAHTLRLSERQIKIWFQNRRMKWKKDHKLPNTKIKSNPSVNLQIAGGSPNQNKGNHVCQ</sequence>
<gene>
    <name type="primary">hoxb4</name>
</gene>
<evidence type="ECO:0000255" key="1">
    <source>
        <dbReference type="PROSITE-ProRule" id="PRU00108"/>
    </source>
</evidence>
<evidence type="ECO:0000256" key="2">
    <source>
        <dbReference type="SAM" id="MobiDB-lite"/>
    </source>
</evidence>
<evidence type="ECO:0000305" key="3"/>
<feature type="chain" id="PRO_0000200127" description="Homeobox protein Hox-B4">
    <location>
        <begin position="1"/>
        <end position="232"/>
    </location>
</feature>
<feature type="DNA-binding region" description="Homeobox" evidence="1">
    <location>
        <begin position="141"/>
        <end position="200"/>
    </location>
</feature>
<feature type="region of interest" description="Disordered" evidence="2">
    <location>
        <begin position="28"/>
        <end position="117"/>
    </location>
</feature>
<feature type="region of interest" description="Disordered" evidence="2">
    <location>
        <begin position="210"/>
        <end position="232"/>
    </location>
</feature>
<feature type="short sequence motif" description="Antp-type hexapeptide">
    <location>
        <begin position="120"/>
        <end position="125"/>
    </location>
</feature>
<feature type="compositionally biased region" description="Low complexity" evidence="2">
    <location>
        <begin position="51"/>
        <end position="68"/>
    </location>
</feature>
<feature type="compositionally biased region" description="Low complexity" evidence="2">
    <location>
        <begin position="94"/>
        <end position="104"/>
    </location>
</feature>